<evidence type="ECO:0000250" key="1"/>
<evidence type="ECO:0000255" key="2"/>
<evidence type="ECO:0000305" key="3"/>
<protein>
    <recommendedName>
        <fullName>Probable translation initiation factor IF-2</fullName>
    </recommendedName>
    <component>
        <recommendedName>
            <fullName>Pho infB intein</fullName>
        </recommendedName>
        <alternativeName>
            <fullName>Pho IF2 intein</fullName>
        </alternativeName>
    </component>
</protein>
<name>IF2P_PYRHO</name>
<proteinExistence type="inferred from homology"/>
<comment type="function">
    <text evidence="1">Function in general translation initiation by promoting the binding of the formylmethionine-tRNA to ribosomes. Seems to function along with eIF-2 (By similarity).</text>
</comment>
<comment type="PTM">
    <text evidence="3">This protein undergoes a protein self splicing that involves a post-translational excision of the intervening region (intein) followed by peptide ligation.</text>
</comment>
<comment type="miscellaneous">
    <text>The intein interrupts the GTP-binding site.</text>
</comment>
<comment type="similarity">
    <text evidence="3">Belongs to the TRAFAC class translation factor GTPase superfamily. Classic translation factor GTPase family. IF-2 subfamily.</text>
</comment>
<accession>O58822</accession>
<feature type="chain" id="PRO_0000014493" description="Probable translation initiation factor IF-2, 1st part" evidence="2">
    <location>
        <begin position="1"/>
        <end position="22"/>
    </location>
</feature>
<feature type="chain" id="PRO_0000014494" description="Pho infB intein" evidence="2">
    <location>
        <begin position="23"/>
        <end position="466"/>
    </location>
</feature>
<feature type="chain" id="PRO_0000014495" description="Probable translation initiation factor IF-2, 2nd part" evidence="2">
    <location>
        <begin position="467"/>
        <end position="1044"/>
    </location>
</feature>
<feature type="domain" description="DOD-type homing endonuclease">
    <location>
        <begin position="173"/>
        <end position="265"/>
    </location>
</feature>
<feature type="domain" description="tr-type G">
    <location>
        <begin position="451"/>
        <end position="668"/>
    </location>
</feature>
<feature type="binding site" evidence="1">
    <location>
        <begin position="524"/>
        <end position="528"/>
    </location>
    <ligand>
        <name>GTP</name>
        <dbReference type="ChEBI" id="CHEBI:37565"/>
    </ligand>
</feature>
<feature type="binding site" evidence="1">
    <location>
        <begin position="578"/>
        <end position="581"/>
    </location>
    <ligand>
        <name>GTP</name>
        <dbReference type="ChEBI" id="CHEBI:37565"/>
    </ligand>
</feature>
<keyword id="KW-0068">Autocatalytic cleavage</keyword>
<keyword id="KW-0255">Endonuclease</keyword>
<keyword id="KW-0342">GTP-binding</keyword>
<keyword id="KW-0378">Hydrolase</keyword>
<keyword id="KW-0396">Initiation factor</keyword>
<keyword id="KW-0404">Intron homing</keyword>
<keyword id="KW-0540">Nuclease</keyword>
<keyword id="KW-0547">Nucleotide-binding</keyword>
<keyword id="KW-0648">Protein biosynthesis</keyword>
<keyword id="KW-0651">Protein splicing</keyword>
<gene>
    <name type="primary">infB</name>
    <name type="ordered locus">PH1095</name>
</gene>
<dbReference type="EMBL" id="BA000001">
    <property type="protein sequence ID" value="BAA30194.1"/>
    <property type="molecule type" value="Genomic_DNA"/>
</dbReference>
<dbReference type="PIR" id="H71049">
    <property type="entry name" value="H71049"/>
</dbReference>
<dbReference type="SMR" id="O58822"/>
<dbReference type="STRING" id="70601.gene:9378054"/>
<dbReference type="MEROPS" id="N10.004"/>
<dbReference type="EnsemblBacteria" id="BAA30194">
    <property type="protein sequence ID" value="BAA30194"/>
    <property type="gene ID" value="BAA30194"/>
</dbReference>
<dbReference type="KEGG" id="pho:PH1095"/>
<dbReference type="eggNOG" id="arCOG01560">
    <property type="taxonomic scope" value="Archaea"/>
</dbReference>
<dbReference type="eggNOG" id="arCOG03151">
    <property type="taxonomic scope" value="Archaea"/>
</dbReference>
<dbReference type="Proteomes" id="UP000000752">
    <property type="component" value="Chromosome"/>
</dbReference>
<dbReference type="GO" id="GO:0005737">
    <property type="term" value="C:cytoplasm"/>
    <property type="evidence" value="ECO:0007669"/>
    <property type="project" value="TreeGrafter"/>
</dbReference>
<dbReference type="GO" id="GO:0004519">
    <property type="term" value="F:endonuclease activity"/>
    <property type="evidence" value="ECO:0007669"/>
    <property type="project" value="UniProtKB-KW"/>
</dbReference>
<dbReference type="GO" id="GO:0005525">
    <property type="term" value="F:GTP binding"/>
    <property type="evidence" value="ECO:0007669"/>
    <property type="project" value="UniProtKB-KW"/>
</dbReference>
<dbReference type="GO" id="GO:0003924">
    <property type="term" value="F:GTPase activity"/>
    <property type="evidence" value="ECO:0007669"/>
    <property type="project" value="UniProtKB-UniRule"/>
</dbReference>
<dbReference type="GO" id="GO:0003743">
    <property type="term" value="F:translation initiation factor activity"/>
    <property type="evidence" value="ECO:0007669"/>
    <property type="project" value="UniProtKB-UniRule"/>
</dbReference>
<dbReference type="GO" id="GO:0016539">
    <property type="term" value="P:intein-mediated protein splicing"/>
    <property type="evidence" value="ECO:0007669"/>
    <property type="project" value="InterPro"/>
</dbReference>
<dbReference type="GO" id="GO:0006314">
    <property type="term" value="P:intron homing"/>
    <property type="evidence" value="ECO:0007669"/>
    <property type="project" value="UniProtKB-KW"/>
</dbReference>
<dbReference type="CDD" id="cd03703">
    <property type="entry name" value="aeIF5B_II"/>
    <property type="match status" value="1"/>
</dbReference>
<dbReference type="CDD" id="cd00081">
    <property type="entry name" value="Hint"/>
    <property type="match status" value="2"/>
</dbReference>
<dbReference type="CDD" id="cd16266">
    <property type="entry name" value="IF2_aeIF5B_IV"/>
    <property type="match status" value="1"/>
</dbReference>
<dbReference type="CDD" id="cd01887">
    <property type="entry name" value="IF2_eIF5B"/>
    <property type="match status" value="1"/>
</dbReference>
<dbReference type="FunFam" id="3.40.50.300:FF:000112">
    <property type="entry name" value="Eukaryotic translation initiation factor 5B"/>
    <property type="match status" value="1"/>
</dbReference>
<dbReference type="FunFam" id="2.40.30.10:FF:000013">
    <property type="entry name" value="eukaryotic translation initiation factor 5B"/>
    <property type="match status" value="1"/>
</dbReference>
<dbReference type="FunFam" id="3.40.50.10050:FF:000009">
    <property type="entry name" value="Probable translation initiation factor IF-2"/>
    <property type="match status" value="1"/>
</dbReference>
<dbReference type="Gene3D" id="2.170.16.10">
    <property type="entry name" value="Hedgehog/Intein (Hint) domain"/>
    <property type="match status" value="2"/>
</dbReference>
<dbReference type="Gene3D" id="3.10.28.10">
    <property type="entry name" value="Homing endonucleases"/>
    <property type="match status" value="1"/>
</dbReference>
<dbReference type="Gene3D" id="3.40.50.300">
    <property type="entry name" value="P-loop containing nucleotide triphosphate hydrolases"/>
    <property type="match status" value="1"/>
</dbReference>
<dbReference type="Gene3D" id="2.40.30.10">
    <property type="entry name" value="Translation factors"/>
    <property type="match status" value="2"/>
</dbReference>
<dbReference type="Gene3D" id="3.40.50.10050">
    <property type="entry name" value="Translation initiation factor IF- 2, domain 3"/>
    <property type="match status" value="1"/>
</dbReference>
<dbReference type="HAMAP" id="MF_00100_A">
    <property type="entry name" value="IF_2_A"/>
    <property type="match status" value="1"/>
</dbReference>
<dbReference type="InterPro" id="IPR004161">
    <property type="entry name" value="EFTu-like_2"/>
</dbReference>
<dbReference type="InterPro" id="IPR029459">
    <property type="entry name" value="EFTU-type"/>
</dbReference>
<dbReference type="InterPro" id="IPR003586">
    <property type="entry name" value="Hint_dom_C"/>
</dbReference>
<dbReference type="InterPro" id="IPR003587">
    <property type="entry name" value="Hint_dom_N"/>
</dbReference>
<dbReference type="InterPro" id="IPR036844">
    <property type="entry name" value="Hint_dom_sf"/>
</dbReference>
<dbReference type="InterPro" id="IPR027434">
    <property type="entry name" value="Homing_endonucl"/>
</dbReference>
<dbReference type="InterPro" id="IPR006142">
    <property type="entry name" value="INTEIN"/>
</dbReference>
<dbReference type="InterPro" id="IPR030934">
    <property type="entry name" value="Intein_C"/>
</dbReference>
<dbReference type="InterPro" id="IPR004042">
    <property type="entry name" value="Intein_endonuc_central"/>
</dbReference>
<dbReference type="InterPro" id="IPR006141">
    <property type="entry name" value="Intein_N"/>
</dbReference>
<dbReference type="InterPro" id="IPR004860">
    <property type="entry name" value="LAGLIDADG_dom"/>
</dbReference>
<dbReference type="InterPro" id="IPR027417">
    <property type="entry name" value="P-loop_NTPase"/>
</dbReference>
<dbReference type="InterPro" id="IPR005225">
    <property type="entry name" value="Small_GTP-bd"/>
</dbReference>
<dbReference type="InterPro" id="IPR000795">
    <property type="entry name" value="T_Tr_GTP-bd_dom"/>
</dbReference>
<dbReference type="InterPro" id="IPR004544">
    <property type="entry name" value="TF_aIF-2_arc"/>
</dbReference>
<dbReference type="InterPro" id="IPR015760">
    <property type="entry name" value="TIF_IF2"/>
</dbReference>
<dbReference type="InterPro" id="IPR023115">
    <property type="entry name" value="TIF_IF2_dom3"/>
</dbReference>
<dbReference type="InterPro" id="IPR036925">
    <property type="entry name" value="TIF_IF2_dom3_sf"/>
</dbReference>
<dbReference type="InterPro" id="IPR009000">
    <property type="entry name" value="Transl_B-barrel_sf"/>
</dbReference>
<dbReference type="NCBIfam" id="TIGR00491">
    <property type="entry name" value="aIF-2"/>
    <property type="match status" value="1"/>
</dbReference>
<dbReference type="NCBIfam" id="TIGR01443">
    <property type="entry name" value="intein_Cterm"/>
    <property type="match status" value="1"/>
</dbReference>
<dbReference type="NCBIfam" id="TIGR01445">
    <property type="entry name" value="intein_Nterm"/>
    <property type="match status" value="1"/>
</dbReference>
<dbReference type="NCBIfam" id="NF003078">
    <property type="entry name" value="PRK04004.1"/>
    <property type="match status" value="1"/>
</dbReference>
<dbReference type="NCBIfam" id="NF011418">
    <property type="entry name" value="PRK14845.1"/>
    <property type="match status" value="1"/>
</dbReference>
<dbReference type="NCBIfam" id="TIGR00231">
    <property type="entry name" value="small_GTP"/>
    <property type="match status" value="1"/>
</dbReference>
<dbReference type="PANTHER" id="PTHR43381:SF4">
    <property type="entry name" value="EUKARYOTIC TRANSLATION INITIATION FACTOR 5B"/>
    <property type="match status" value="1"/>
</dbReference>
<dbReference type="PANTHER" id="PTHR43381">
    <property type="entry name" value="TRANSLATION INITIATION FACTOR IF-2-RELATED"/>
    <property type="match status" value="1"/>
</dbReference>
<dbReference type="Pfam" id="PF00009">
    <property type="entry name" value="GTP_EFTU"/>
    <property type="match status" value="1"/>
</dbReference>
<dbReference type="Pfam" id="PF03144">
    <property type="entry name" value="GTP_EFTU_D2"/>
    <property type="match status" value="1"/>
</dbReference>
<dbReference type="Pfam" id="PF14578">
    <property type="entry name" value="GTP_EFTU_D4"/>
    <property type="match status" value="1"/>
</dbReference>
<dbReference type="Pfam" id="PF11987">
    <property type="entry name" value="IF-2"/>
    <property type="match status" value="1"/>
</dbReference>
<dbReference type="Pfam" id="PF14890">
    <property type="entry name" value="Intein_splicing"/>
    <property type="match status" value="1"/>
</dbReference>
<dbReference type="Pfam" id="PF14528">
    <property type="entry name" value="LAGLIDADG_3"/>
    <property type="match status" value="1"/>
</dbReference>
<dbReference type="PRINTS" id="PR00379">
    <property type="entry name" value="INTEIN"/>
</dbReference>
<dbReference type="SMART" id="SM00305">
    <property type="entry name" value="HintC"/>
    <property type="match status" value="1"/>
</dbReference>
<dbReference type="SMART" id="SM00306">
    <property type="entry name" value="HintN"/>
    <property type="match status" value="1"/>
</dbReference>
<dbReference type="SUPFAM" id="SSF51294">
    <property type="entry name" value="Hedgehog/intein (Hint) domain"/>
    <property type="match status" value="1"/>
</dbReference>
<dbReference type="SUPFAM" id="SSF55608">
    <property type="entry name" value="Homing endonucleases"/>
    <property type="match status" value="1"/>
</dbReference>
<dbReference type="SUPFAM" id="SSF52156">
    <property type="entry name" value="Initiation factor IF2/eIF5b, domain 3"/>
    <property type="match status" value="1"/>
</dbReference>
<dbReference type="SUPFAM" id="SSF52540">
    <property type="entry name" value="P-loop containing nucleoside triphosphate hydrolases"/>
    <property type="match status" value="1"/>
</dbReference>
<dbReference type="SUPFAM" id="SSF50447">
    <property type="entry name" value="Translation proteins"/>
    <property type="match status" value="1"/>
</dbReference>
<dbReference type="PROSITE" id="PS51722">
    <property type="entry name" value="G_TR_2"/>
    <property type="match status" value="1"/>
</dbReference>
<dbReference type="PROSITE" id="PS50818">
    <property type="entry name" value="INTEIN_C_TER"/>
    <property type="match status" value="1"/>
</dbReference>
<dbReference type="PROSITE" id="PS50819">
    <property type="entry name" value="INTEIN_ENDONUCLEASE"/>
    <property type="match status" value="1"/>
</dbReference>
<dbReference type="PROSITE" id="PS50817">
    <property type="entry name" value="INTEIN_N_TER"/>
    <property type="match status" value="1"/>
</dbReference>
<sequence>MSYVKRIRQPIIAVLGHVDHGKCLLPEERVILPDYGPITLEELFNMTKETVFKDEEKEVRKLGIRMPVAGVDGRVRLLEGPYVWKVRYKGKMLRVKLKDWHSVAVTPEHPFLTTRGWVRADQLKPGDYVAVPKILPGKDDKEKFLQYVHEKLKGKVHIKLPSSDEEWETFFYFAGTIFGRENSVNPEGLTHEVKALLELFKVLFEYPREVLRVLFMAPVRYVANFLRGFFDINGYVNGEELRVEVRGAPHEVLEELSLILLRLGIVSKIYPTSLAISGRRNLELFRRYIGFSEKQKAKELEGIIRRSENSESYPIFEELRRIRLLFGFTRAELSSTIPLYSKYESKEAPSYEILMKILNTIEKGSKDLNKKITILEGRVRDHEYIEEFKREGLIKDGKLTELGKELLEVWRNREFDSRDVNYLRNIIENFVFLPVEKIEEFEYDGYVYDVTTETHNFIANGILVHNTTLLDKIRKTNVAAKEAGGITQHIGATEVPIDVVKKIAGPLIKLWKAEIRLPGLLFIDTPGHEAFTSLRARGGSLADLAVLVIDVNEGFQPQTIESIEILRRYRTPFVVAANKIDRIRGWVIEEDEPFLMNIKRQDQRAIQELETKLWELIGKFYEFGFQANRFDRVQNFTRELAIVPISAKYGIGIAELLVLIAGLSQKYLEEKLKIEVEGPARGTILEVREEPGLGHTIDVIIYDGTLHKDDTIVVGGKDKAIVTKVRALLKPKPLDEIRDPRFRFDYVDEVTAAAGVKIAAPGLEEALAGSPVIAAPTPEDVERAKEEIMRQIESVVISTDKVGVIVKADTLGSLEALSKELQEKEIPIRKADVGNISKTDVMEALSVKEENPKYGVILGFNVKVNEDAKEVAKAKEVPIFVGNIIYKLIEDYEAWIKEEEEKRKRELLAKVTFPGVIKLYPDERYVFRRSNPAIVGIEVLEGRIKPGVTLIKQNGQKVGTIRSIKSRDEFLQEARKGQAVAIAIEGAIVGRHIHPGETLYVDLSRDDAIILLKHLRDVLEDTDIKALKMIAQVKAKEDPFWRAV</sequence>
<reference key="1">
    <citation type="journal article" date="1998" name="DNA Res.">
        <title>Complete sequence and gene organization of the genome of a hyper-thermophilic archaebacterium, Pyrococcus horikoshii OT3.</title>
        <authorList>
            <person name="Kawarabayasi Y."/>
            <person name="Sawada M."/>
            <person name="Horikawa H."/>
            <person name="Haikawa Y."/>
            <person name="Hino Y."/>
            <person name="Yamamoto S."/>
            <person name="Sekine M."/>
            <person name="Baba S."/>
            <person name="Kosugi H."/>
            <person name="Hosoyama A."/>
            <person name="Nagai Y."/>
            <person name="Sakai M."/>
            <person name="Ogura K."/>
            <person name="Otsuka R."/>
            <person name="Nakazawa H."/>
            <person name="Takamiya M."/>
            <person name="Ohfuku Y."/>
            <person name="Funahashi T."/>
            <person name="Tanaka T."/>
            <person name="Kudoh Y."/>
            <person name="Yamazaki J."/>
            <person name="Kushida N."/>
            <person name="Oguchi A."/>
            <person name="Aoki K."/>
            <person name="Yoshizawa T."/>
            <person name="Nakamura Y."/>
            <person name="Robb F.T."/>
            <person name="Horikoshi K."/>
            <person name="Masuchi Y."/>
            <person name="Shizuya H."/>
            <person name="Kikuchi H."/>
        </authorList>
    </citation>
    <scope>NUCLEOTIDE SEQUENCE [LARGE SCALE GENOMIC DNA]</scope>
    <source>
        <strain>ATCC 700860 / DSM 12428 / JCM 9974 / NBRC 100139 / OT-3</strain>
    </source>
</reference>
<organism>
    <name type="scientific">Pyrococcus horikoshii (strain ATCC 700860 / DSM 12428 / JCM 9974 / NBRC 100139 / OT-3)</name>
    <dbReference type="NCBI Taxonomy" id="70601"/>
    <lineage>
        <taxon>Archaea</taxon>
        <taxon>Methanobacteriati</taxon>
        <taxon>Methanobacteriota</taxon>
        <taxon>Thermococci</taxon>
        <taxon>Thermococcales</taxon>
        <taxon>Thermococcaceae</taxon>
        <taxon>Pyrococcus</taxon>
    </lineage>
</organism>